<organism>
    <name type="scientific">Prochlorococcus marinus (strain MIT 9301)</name>
    <dbReference type="NCBI Taxonomy" id="167546"/>
    <lineage>
        <taxon>Bacteria</taxon>
        <taxon>Bacillati</taxon>
        <taxon>Cyanobacteriota</taxon>
        <taxon>Cyanophyceae</taxon>
        <taxon>Synechococcales</taxon>
        <taxon>Prochlorococcaceae</taxon>
        <taxon>Prochlorococcus</taxon>
    </lineage>
</organism>
<sequence>MHLSPQEKDKLLIFSAALLAERRLSRGLKLNYPETVAFLSFQVLEGARDGKSVSQLMSEGTTWLSKSQVMEGIPEMVDEVQIEAVFPDGTKLVTIHNPIN</sequence>
<accession>A3PCN9</accession>
<dbReference type="EC" id="3.5.1.5" evidence="1"/>
<dbReference type="EMBL" id="CP000576">
    <property type="protein sequence ID" value="ABO17514.1"/>
    <property type="molecule type" value="Genomic_DNA"/>
</dbReference>
<dbReference type="RefSeq" id="WP_011862863.1">
    <property type="nucleotide sequence ID" value="NC_009091.1"/>
</dbReference>
<dbReference type="SMR" id="A3PCN9"/>
<dbReference type="STRING" id="167546.P9301_08911"/>
<dbReference type="KEGG" id="pmg:P9301_08911"/>
<dbReference type="eggNOG" id="COG0831">
    <property type="taxonomic scope" value="Bacteria"/>
</dbReference>
<dbReference type="HOGENOM" id="CLU_145825_1_0_3"/>
<dbReference type="OrthoDB" id="9793527at2"/>
<dbReference type="UniPathway" id="UPA00258">
    <property type="reaction ID" value="UER00370"/>
</dbReference>
<dbReference type="Proteomes" id="UP000001430">
    <property type="component" value="Chromosome"/>
</dbReference>
<dbReference type="GO" id="GO:0005737">
    <property type="term" value="C:cytoplasm"/>
    <property type="evidence" value="ECO:0007669"/>
    <property type="project" value="UniProtKB-SubCell"/>
</dbReference>
<dbReference type="GO" id="GO:0016151">
    <property type="term" value="F:nickel cation binding"/>
    <property type="evidence" value="ECO:0007669"/>
    <property type="project" value="InterPro"/>
</dbReference>
<dbReference type="GO" id="GO:0009039">
    <property type="term" value="F:urease activity"/>
    <property type="evidence" value="ECO:0007669"/>
    <property type="project" value="UniProtKB-UniRule"/>
</dbReference>
<dbReference type="GO" id="GO:0043419">
    <property type="term" value="P:urea catabolic process"/>
    <property type="evidence" value="ECO:0007669"/>
    <property type="project" value="UniProtKB-UniRule"/>
</dbReference>
<dbReference type="CDD" id="cd00390">
    <property type="entry name" value="Urease_gamma"/>
    <property type="match status" value="1"/>
</dbReference>
<dbReference type="Gene3D" id="3.30.280.10">
    <property type="entry name" value="Urease, gamma-like subunit"/>
    <property type="match status" value="1"/>
</dbReference>
<dbReference type="HAMAP" id="MF_00739">
    <property type="entry name" value="Urease_gamma"/>
    <property type="match status" value="1"/>
</dbReference>
<dbReference type="InterPro" id="IPR012010">
    <property type="entry name" value="Urease_gamma"/>
</dbReference>
<dbReference type="InterPro" id="IPR002026">
    <property type="entry name" value="Urease_gamma/gamma-beta_su"/>
</dbReference>
<dbReference type="InterPro" id="IPR036463">
    <property type="entry name" value="Urease_gamma_sf"/>
</dbReference>
<dbReference type="InterPro" id="IPR050069">
    <property type="entry name" value="Urease_subunit"/>
</dbReference>
<dbReference type="NCBIfam" id="NF009712">
    <property type="entry name" value="PRK13241.1"/>
    <property type="match status" value="1"/>
</dbReference>
<dbReference type="NCBIfam" id="TIGR00193">
    <property type="entry name" value="urease_gam"/>
    <property type="match status" value="1"/>
</dbReference>
<dbReference type="PANTHER" id="PTHR33569">
    <property type="entry name" value="UREASE"/>
    <property type="match status" value="1"/>
</dbReference>
<dbReference type="PANTHER" id="PTHR33569:SF1">
    <property type="entry name" value="UREASE"/>
    <property type="match status" value="1"/>
</dbReference>
<dbReference type="Pfam" id="PF00547">
    <property type="entry name" value="Urease_gamma"/>
    <property type="match status" value="1"/>
</dbReference>
<dbReference type="PIRSF" id="PIRSF001223">
    <property type="entry name" value="Urease_gamma"/>
    <property type="match status" value="1"/>
</dbReference>
<dbReference type="SUPFAM" id="SSF54111">
    <property type="entry name" value="Urease, gamma-subunit"/>
    <property type="match status" value="1"/>
</dbReference>
<gene>
    <name evidence="1" type="primary">ureA</name>
    <name type="ordered locus">P9301_08911</name>
</gene>
<keyword id="KW-0963">Cytoplasm</keyword>
<keyword id="KW-0378">Hydrolase</keyword>
<keyword id="KW-1185">Reference proteome</keyword>
<feature type="chain" id="PRO_1000046348" description="Urease subunit gamma">
    <location>
        <begin position="1"/>
        <end position="100"/>
    </location>
</feature>
<reference key="1">
    <citation type="journal article" date="2007" name="PLoS Genet.">
        <title>Patterns and implications of gene gain and loss in the evolution of Prochlorococcus.</title>
        <authorList>
            <person name="Kettler G.C."/>
            <person name="Martiny A.C."/>
            <person name="Huang K."/>
            <person name="Zucker J."/>
            <person name="Coleman M.L."/>
            <person name="Rodrigue S."/>
            <person name="Chen F."/>
            <person name="Lapidus A."/>
            <person name="Ferriera S."/>
            <person name="Johnson J."/>
            <person name="Steglich C."/>
            <person name="Church G.M."/>
            <person name="Richardson P."/>
            <person name="Chisholm S.W."/>
        </authorList>
    </citation>
    <scope>NUCLEOTIDE SEQUENCE [LARGE SCALE GENOMIC DNA]</scope>
    <source>
        <strain>MIT 9301</strain>
    </source>
</reference>
<proteinExistence type="inferred from homology"/>
<evidence type="ECO:0000255" key="1">
    <source>
        <dbReference type="HAMAP-Rule" id="MF_00739"/>
    </source>
</evidence>
<protein>
    <recommendedName>
        <fullName evidence="1">Urease subunit gamma</fullName>
        <ecNumber evidence="1">3.5.1.5</ecNumber>
    </recommendedName>
    <alternativeName>
        <fullName evidence="1">Urea amidohydrolase subunit gamma</fullName>
    </alternativeName>
</protein>
<comment type="catalytic activity">
    <reaction evidence="1">
        <text>urea + 2 H2O + H(+) = hydrogencarbonate + 2 NH4(+)</text>
        <dbReference type="Rhea" id="RHEA:20557"/>
        <dbReference type="ChEBI" id="CHEBI:15377"/>
        <dbReference type="ChEBI" id="CHEBI:15378"/>
        <dbReference type="ChEBI" id="CHEBI:16199"/>
        <dbReference type="ChEBI" id="CHEBI:17544"/>
        <dbReference type="ChEBI" id="CHEBI:28938"/>
        <dbReference type="EC" id="3.5.1.5"/>
    </reaction>
</comment>
<comment type="pathway">
    <text evidence="1">Nitrogen metabolism; urea degradation; CO(2) and NH(3) from urea (urease route): step 1/1.</text>
</comment>
<comment type="subunit">
    <text evidence="1">Heterotrimer of UreA (gamma), UreB (beta) and UreC (alpha) subunits. Three heterotrimers associate to form the active enzyme.</text>
</comment>
<comment type="subcellular location">
    <subcellularLocation>
        <location evidence="1">Cytoplasm</location>
    </subcellularLocation>
</comment>
<comment type="similarity">
    <text evidence="1">Belongs to the urease gamma subunit family.</text>
</comment>
<name>URE3_PROM0</name>